<keyword id="KW-0378">Hydrolase</keyword>
<keyword id="KW-0460">Magnesium</keyword>
<keyword id="KW-0479">Metal-binding</keyword>
<keyword id="KW-0546">Nucleotide metabolism</keyword>
<keyword id="KW-0547">Nucleotide-binding</keyword>
<keyword id="KW-1185">Reference proteome</keyword>
<sequence>MLRLIVATHNPNKAKEIKDFFKGYPVEVVSMKELGIEEDIEEYGNTIEENALIKARFLRDKVKEGIVISDDTGLFVEYLGGQPGVYSARFAGENATYEENNRKLLKLLEGVPYEKRKAYFKTIIAVIEGEKEVLLEGVLEGHILDHLQGENGFGYDPVFFVDGIGKTLAELSLEEKNKISHRGKALLKLKEYILKRLEEN</sequence>
<proteinExistence type="inferred from homology"/>
<reference key="1">
    <citation type="journal article" date="2002" name="Genome Res.">
        <title>A complete sequence of the T. tengcongensis genome.</title>
        <authorList>
            <person name="Bao Q."/>
            <person name="Tian Y."/>
            <person name="Li W."/>
            <person name="Xu Z."/>
            <person name="Xuan Z."/>
            <person name="Hu S."/>
            <person name="Dong W."/>
            <person name="Yang J."/>
            <person name="Chen Y."/>
            <person name="Xue Y."/>
            <person name="Xu Y."/>
            <person name="Lai X."/>
            <person name="Huang L."/>
            <person name="Dong X."/>
            <person name="Ma Y."/>
            <person name="Ling L."/>
            <person name="Tan H."/>
            <person name="Chen R."/>
            <person name="Wang J."/>
            <person name="Yu J."/>
            <person name="Yang H."/>
        </authorList>
    </citation>
    <scope>NUCLEOTIDE SEQUENCE [LARGE SCALE GENOMIC DNA]</scope>
    <source>
        <strain>DSM 15242 / JCM 11007 / NBRC 100824 / MB4</strain>
    </source>
</reference>
<dbReference type="EC" id="3.6.1.66" evidence="1"/>
<dbReference type="EMBL" id="AE008691">
    <property type="protein sequence ID" value="AAM23889.1"/>
    <property type="molecule type" value="Genomic_DNA"/>
</dbReference>
<dbReference type="SMR" id="Q8RC29"/>
<dbReference type="STRING" id="273068.TTE0620"/>
<dbReference type="KEGG" id="tte:TTE0620"/>
<dbReference type="eggNOG" id="COG0127">
    <property type="taxonomic scope" value="Bacteria"/>
</dbReference>
<dbReference type="HOGENOM" id="CLU_082080_0_2_9"/>
<dbReference type="Proteomes" id="UP000000555">
    <property type="component" value="Chromosome"/>
</dbReference>
<dbReference type="GO" id="GO:0005829">
    <property type="term" value="C:cytosol"/>
    <property type="evidence" value="ECO:0007669"/>
    <property type="project" value="TreeGrafter"/>
</dbReference>
<dbReference type="GO" id="GO:0035870">
    <property type="term" value="F:dITP diphosphatase activity"/>
    <property type="evidence" value="ECO:0007669"/>
    <property type="project" value="RHEA"/>
</dbReference>
<dbReference type="GO" id="GO:0036220">
    <property type="term" value="F:ITP diphosphatase activity"/>
    <property type="evidence" value="ECO:0007669"/>
    <property type="project" value="UniProtKB-EC"/>
</dbReference>
<dbReference type="GO" id="GO:0046872">
    <property type="term" value="F:metal ion binding"/>
    <property type="evidence" value="ECO:0007669"/>
    <property type="project" value="UniProtKB-KW"/>
</dbReference>
<dbReference type="GO" id="GO:0000166">
    <property type="term" value="F:nucleotide binding"/>
    <property type="evidence" value="ECO:0007669"/>
    <property type="project" value="UniProtKB-KW"/>
</dbReference>
<dbReference type="GO" id="GO:0017111">
    <property type="term" value="F:ribonucleoside triphosphate phosphatase activity"/>
    <property type="evidence" value="ECO:0007669"/>
    <property type="project" value="InterPro"/>
</dbReference>
<dbReference type="GO" id="GO:0036222">
    <property type="term" value="F:XTP diphosphatase activity"/>
    <property type="evidence" value="ECO:0007669"/>
    <property type="project" value="RHEA"/>
</dbReference>
<dbReference type="GO" id="GO:0009117">
    <property type="term" value="P:nucleotide metabolic process"/>
    <property type="evidence" value="ECO:0007669"/>
    <property type="project" value="UniProtKB-KW"/>
</dbReference>
<dbReference type="GO" id="GO:0009146">
    <property type="term" value="P:purine nucleoside triphosphate catabolic process"/>
    <property type="evidence" value="ECO:0007669"/>
    <property type="project" value="UniProtKB-UniRule"/>
</dbReference>
<dbReference type="CDD" id="cd00515">
    <property type="entry name" value="HAM1"/>
    <property type="match status" value="1"/>
</dbReference>
<dbReference type="FunFam" id="3.90.950.10:FF:000001">
    <property type="entry name" value="dITP/XTP pyrophosphatase"/>
    <property type="match status" value="1"/>
</dbReference>
<dbReference type="Gene3D" id="3.90.950.10">
    <property type="match status" value="1"/>
</dbReference>
<dbReference type="HAMAP" id="MF_01405">
    <property type="entry name" value="Non_canon_purine_NTPase"/>
    <property type="match status" value="1"/>
</dbReference>
<dbReference type="InterPro" id="IPR020922">
    <property type="entry name" value="dITP/XTP_pyrophosphatase"/>
</dbReference>
<dbReference type="InterPro" id="IPR029001">
    <property type="entry name" value="ITPase-like_fam"/>
</dbReference>
<dbReference type="InterPro" id="IPR002637">
    <property type="entry name" value="RdgB/HAM1"/>
</dbReference>
<dbReference type="NCBIfam" id="TIGR00042">
    <property type="entry name" value="RdgB/HAM1 family non-canonical purine NTP pyrophosphatase"/>
    <property type="match status" value="1"/>
</dbReference>
<dbReference type="PANTHER" id="PTHR11067:SF9">
    <property type="entry name" value="INOSINE TRIPHOSPHATE PYROPHOSPHATASE"/>
    <property type="match status" value="1"/>
</dbReference>
<dbReference type="PANTHER" id="PTHR11067">
    <property type="entry name" value="INOSINE TRIPHOSPHATE PYROPHOSPHATASE/HAM1 PROTEIN"/>
    <property type="match status" value="1"/>
</dbReference>
<dbReference type="Pfam" id="PF01725">
    <property type="entry name" value="Ham1p_like"/>
    <property type="match status" value="1"/>
</dbReference>
<dbReference type="SUPFAM" id="SSF52972">
    <property type="entry name" value="ITPase-like"/>
    <property type="match status" value="1"/>
</dbReference>
<accession>Q8RC29</accession>
<feature type="chain" id="PRO_0000178255" description="dITP/XTP pyrophosphatase">
    <location>
        <begin position="1"/>
        <end position="200"/>
    </location>
</feature>
<feature type="active site" description="Proton acceptor" evidence="1">
    <location>
        <position position="71"/>
    </location>
</feature>
<feature type="binding site" evidence="1">
    <location>
        <begin position="8"/>
        <end position="13"/>
    </location>
    <ligand>
        <name>substrate</name>
    </ligand>
</feature>
<feature type="binding site" evidence="1">
    <location>
        <position position="41"/>
    </location>
    <ligand>
        <name>Mg(2+)</name>
        <dbReference type="ChEBI" id="CHEBI:18420"/>
    </ligand>
</feature>
<feature type="binding site" evidence="1">
    <location>
        <position position="71"/>
    </location>
    <ligand>
        <name>Mg(2+)</name>
        <dbReference type="ChEBI" id="CHEBI:18420"/>
    </ligand>
</feature>
<feature type="binding site" evidence="1">
    <location>
        <position position="72"/>
    </location>
    <ligand>
        <name>substrate</name>
    </ligand>
</feature>
<feature type="binding site" evidence="1">
    <location>
        <begin position="153"/>
        <end position="156"/>
    </location>
    <ligand>
        <name>substrate</name>
    </ligand>
</feature>
<feature type="binding site" evidence="1">
    <location>
        <position position="176"/>
    </location>
    <ligand>
        <name>substrate</name>
    </ligand>
</feature>
<feature type="binding site" evidence="1">
    <location>
        <begin position="181"/>
        <end position="182"/>
    </location>
    <ligand>
        <name>substrate</name>
    </ligand>
</feature>
<protein>
    <recommendedName>
        <fullName evidence="1">dITP/XTP pyrophosphatase</fullName>
        <ecNumber evidence="1">3.6.1.66</ecNumber>
    </recommendedName>
    <alternativeName>
        <fullName evidence="1">Non-canonical purine NTP pyrophosphatase</fullName>
    </alternativeName>
    <alternativeName>
        <fullName evidence="1">Non-standard purine NTP pyrophosphatase</fullName>
    </alternativeName>
    <alternativeName>
        <fullName evidence="1">Nucleoside-triphosphate diphosphatase</fullName>
    </alternativeName>
    <alternativeName>
        <fullName evidence="1">Nucleoside-triphosphate pyrophosphatase</fullName>
        <shortName evidence="1">NTPase</shortName>
    </alternativeName>
</protein>
<gene>
    <name type="ordered locus">TTE0620</name>
</gene>
<evidence type="ECO:0000255" key="1">
    <source>
        <dbReference type="HAMAP-Rule" id="MF_01405"/>
    </source>
</evidence>
<name>IXTPA_CALS4</name>
<comment type="function">
    <text evidence="1">Pyrophosphatase that catalyzes the hydrolysis of nucleoside triphosphates to their monophosphate derivatives, with a high preference for the non-canonical purine nucleotides XTP (xanthosine triphosphate), dITP (deoxyinosine triphosphate) and ITP. Seems to function as a house-cleaning enzyme that removes non-canonical purine nucleotides from the nucleotide pool, thus preventing their incorporation into DNA/RNA and avoiding chromosomal lesions.</text>
</comment>
<comment type="catalytic activity">
    <reaction evidence="1">
        <text>XTP + H2O = XMP + diphosphate + H(+)</text>
        <dbReference type="Rhea" id="RHEA:28610"/>
        <dbReference type="ChEBI" id="CHEBI:15377"/>
        <dbReference type="ChEBI" id="CHEBI:15378"/>
        <dbReference type="ChEBI" id="CHEBI:33019"/>
        <dbReference type="ChEBI" id="CHEBI:57464"/>
        <dbReference type="ChEBI" id="CHEBI:61314"/>
        <dbReference type="EC" id="3.6.1.66"/>
    </reaction>
</comment>
<comment type="catalytic activity">
    <reaction evidence="1">
        <text>dITP + H2O = dIMP + diphosphate + H(+)</text>
        <dbReference type="Rhea" id="RHEA:28342"/>
        <dbReference type="ChEBI" id="CHEBI:15377"/>
        <dbReference type="ChEBI" id="CHEBI:15378"/>
        <dbReference type="ChEBI" id="CHEBI:33019"/>
        <dbReference type="ChEBI" id="CHEBI:61194"/>
        <dbReference type="ChEBI" id="CHEBI:61382"/>
        <dbReference type="EC" id="3.6.1.66"/>
    </reaction>
</comment>
<comment type="catalytic activity">
    <reaction evidence="1">
        <text>ITP + H2O = IMP + diphosphate + H(+)</text>
        <dbReference type="Rhea" id="RHEA:29399"/>
        <dbReference type="ChEBI" id="CHEBI:15377"/>
        <dbReference type="ChEBI" id="CHEBI:15378"/>
        <dbReference type="ChEBI" id="CHEBI:33019"/>
        <dbReference type="ChEBI" id="CHEBI:58053"/>
        <dbReference type="ChEBI" id="CHEBI:61402"/>
        <dbReference type="EC" id="3.6.1.66"/>
    </reaction>
</comment>
<comment type="cofactor">
    <cofactor evidence="1">
        <name>Mg(2+)</name>
        <dbReference type="ChEBI" id="CHEBI:18420"/>
    </cofactor>
    <text evidence="1">Binds 1 Mg(2+) ion per subunit.</text>
</comment>
<comment type="subunit">
    <text evidence="1">Homodimer.</text>
</comment>
<comment type="similarity">
    <text evidence="1">Belongs to the HAM1 NTPase family.</text>
</comment>
<organism>
    <name type="scientific">Caldanaerobacter subterraneus subsp. tengcongensis (strain DSM 15242 / JCM 11007 / NBRC 100824 / MB4)</name>
    <name type="common">Thermoanaerobacter tengcongensis</name>
    <dbReference type="NCBI Taxonomy" id="273068"/>
    <lineage>
        <taxon>Bacteria</taxon>
        <taxon>Bacillati</taxon>
        <taxon>Bacillota</taxon>
        <taxon>Clostridia</taxon>
        <taxon>Thermoanaerobacterales</taxon>
        <taxon>Thermoanaerobacteraceae</taxon>
        <taxon>Caldanaerobacter</taxon>
    </lineage>
</organism>